<evidence type="ECO:0000255" key="1">
    <source>
        <dbReference type="HAMAP-Rule" id="MF_01719"/>
    </source>
</evidence>
<gene>
    <name evidence="1" type="primary">metN</name>
    <name type="ordered locus">RSc0920</name>
</gene>
<feature type="chain" id="PRO_0000270362" description="Methionine import ATP-binding protein MetN">
    <location>
        <begin position="1"/>
        <end position="350"/>
    </location>
</feature>
<feature type="domain" description="ABC transporter" evidence="1">
    <location>
        <begin position="2"/>
        <end position="242"/>
    </location>
</feature>
<feature type="binding site" evidence="1">
    <location>
        <begin position="39"/>
        <end position="46"/>
    </location>
    <ligand>
        <name>ATP</name>
        <dbReference type="ChEBI" id="CHEBI:30616"/>
    </ligand>
</feature>
<proteinExistence type="inferred from homology"/>
<protein>
    <recommendedName>
        <fullName evidence="1">Methionine import ATP-binding protein MetN</fullName>
        <ecNumber evidence="1">7.4.2.11</ecNumber>
    </recommendedName>
</protein>
<keyword id="KW-0029">Amino-acid transport</keyword>
<keyword id="KW-0067">ATP-binding</keyword>
<keyword id="KW-0997">Cell inner membrane</keyword>
<keyword id="KW-1003">Cell membrane</keyword>
<keyword id="KW-0472">Membrane</keyword>
<keyword id="KW-0547">Nucleotide-binding</keyword>
<keyword id="KW-1185">Reference proteome</keyword>
<keyword id="KW-1278">Translocase</keyword>
<keyword id="KW-0813">Transport</keyword>
<dbReference type="EC" id="7.4.2.11" evidence="1"/>
<dbReference type="EMBL" id="AL646052">
    <property type="protein sequence ID" value="CAD14622.1"/>
    <property type="molecule type" value="Genomic_DNA"/>
</dbReference>
<dbReference type="RefSeq" id="WP_011000872.1">
    <property type="nucleotide sequence ID" value="NC_003295.1"/>
</dbReference>
<dbReference type="SMR" id="Q8Y0X3"/>
<dbReference type="STRING" id="267608.RSc0920"/>
<dbReference type="EnsemblBacteria" id="CAD14622">
    <property type="protein sequence ID" value="CAD14622"/>
    <property type="gene ID" value="RSc0920"/>
</dbReference>
<dbReference type="KEGG" id="rso:RSc0920"/>
<dbReference type="eggNOG" id="COG1135">
    <property type="taxonomic scope" value="Bacteria"/>
</dbReference>
<dbReference type="HOGENOM" id="CLU_000604_1_3_4"/>
<dbReference type="Proteomes" id="UP000001436">
    <property type="component" value="Chromosome"/>
</dbReference>
<dbReference type="GO" id="GO:0005886">
    <property type="term" value="C:plasma membrane"/>
    <property type="evidence" value="ECO:0007669"/>
    <property type="project" value="UniProtKB-SubCell"/>
</dbReference>
<dbReference type="GO" id="GO:0033232">
    <property type="term" value="F:ABC-type D-methionine transporter activity"/>
    <property type="evidence" value="ECO:0007669"/>
    <property type="project" value="UniProtKB-EC"/>
</dbReference>
<dbReference type="GO" id="GO:0005524">
    <property type="term" value="F:ATP binding"/>
    <property type="evidence" value="ECO:0007669"/>
    <property type="project" value="UniProtKB-KW"/>
</dbReference>
<dbReference type="GO" id="GO:0016887">
    <property type="term" value="F:ATP hydrolysis activity"/>
    <property type="evidence" value="ECO:0007669"/>
    <property type="project" value="InterPro"/>
</dbReference>
<dbReference type="CDD" id="cd03258">
    <property type="entry name" value="ABC_MetN_methionine_transporter"/>
    <property type="match status" value="1"/>
</dbReference>
<dbReference type="FunFam" id="3.40.50.300:FF:000056">
    <property type="entry name" value="Cell division ATP-binding protein FtsE"/>
    <property type="match status" value="1"/>
</dbReference>
<dbReference type="Gene3D" id="3.30.70.260">
    <property type="match status" value="1"/>
</dbReference>
<dbReference type="Gene3D" id="3.40.50.300">
    <property type="entry name" value="P-loop containing nucleotide triphosphate hydrolases"/>
    <property type="match status" value="1"/>
</dbReference>
<dbReference type="InterPro" id="IPR003593">
    <property type="entry name" value="AAA+_ATPase"/>
</dbReference>
<dbReference type="InterPro" id="IPR003439">
    <property type="entry name" value="ABC_transporter-like_ATP-bd"/>
</dbReference>
<dbReference type="InterPro" id="IPR017871">
    <property type="entry name" value="ABC_transporter-like_CS"/>
</dbReference>
<dbReference type="InterPro" id="IPR045865">
    <property type="entry name" value="ACT-like_dom_sf"/>
</dbReference>
<dbReference type="InterPro" id="IPR041701">
    <property type="entry name" value="MetN_ABC"/>
</dbReference>
<dbReference type="InterPro" id="IPR050086">
    <property type="entry name" value="MetN_ABC_transporter-like"/>
</dbReference>
<dbReference type="InterPro" id="IPR018449">
    <property type="entry name" value="NIL_domain"/>
</dbReference>
<dbReference type="InterPro" id="IPR027417">
    <property type="entry name" value="P-loop_NTPase"/>
</dbReference>
<dbReference type="PANTHER" id="PTHR43166">
    <property type="entry name" value="AMINO ACID IMPORT ATP-BINDING PROTEIN"/>
    <property type="match status" value="1"/>
</dbReference>
<dbReference type="PANTHER" id="PTHR43166:SF30">
    <property type="entry name" value="METHIONINE IMPORT ATP-BINDING PROTEIN METN"/>
    <property type="match status" value="1"/>
</dbReference>
<dbReference type="Pfam" id="PF00005">
    <property type="entry name" value="ABC_tran"/>
    <property type="match status" value="1"/>
</dbReference>
<dbReference type="Pfam" id="PF09383">
    <property type="entry name" value="NIL"/>
    <property type="match status" value="1"/>
</dbReference>
<dbReference type="SMART" id="SM00382">
    <property type="entry name" value="AAA"/>
    <property type="match status" value="1"/>
</dbReference>
<dbReference type="SMART" id="SM00930">
    <property type="entry name" value="NIL"/>
    <property type="match status" value="1"/>
</dbReference>
<dbReference type="SUPFAM" id="SSF55021">
    <property type="entry name" value="ACT-like"/>
    <property type="match status" value="1"/>
</dbReference>
<dbReference type="SUPFAM" id="SSF52540">
    <property type="entry name" value="P-loop containing nucleoside triphosphate hydrolases"/>
    <property type="match status" value="1"/>
</dbReference>
<dbReference type="PROSITE" id="PS00211">
    <property type="entry name" value="ABC_TRANSPORTER_1"/>
    <property type="match status" value="1"/>
</dbReference>
<dbReference type="PROSITE" id="PS50893">
    <property type="entry name" value="ABC_TRANSPORTER_2"/>
    <property type="match status" value="1"/>
</dbReference>
<dbReference type="PROSITE" id="PS51264">
    <property type="entry name" value="METN"/>
    <property type="match status" value="1"/>
</dbReference>
<comment type="function">
    <text evidence="1">Part of the ABC transporter complex MetNIQ involved in methionine import. Responsible for energy coupling to the transport system.</text>
</comment>
<comment type="catalytic activity">
    <reaction evidence="1">
        <text>L-methionine(out) + ATP + H2O = L-methionine(in) + ADP + phosphate + H(+)</text>
        <dbReference type="Rhea" id="RHEA:29779"/>
        <dbReference type="ChEBI" id="CHEBI:15377"/>
        <dbReference type="ChEBI" id="CHEBI:15378"/>
        <dbReference type="ChEBI" id="CHEBI:30616"/>
        <dbReference type="ChEBI" id="CHEBI:43474"/>
        <dbReference type="ChEBI" id="CHEBI:57844"/>
        <dbReference type="ChEBI" id="CHEBI:456216"/>
        <dbReference type="EC" id="7.4.2.11"/>
    </reaction>
</comment>
<comment type="catalytic activity">
    <reaction evidence="1">
        <text>D-methionine(out) + ATP + H2O = D-methionine(in) + ADP + phosphate + H(+)</text>
        <dbReference type="Rhea" id="RHEA:29767"/>
        <dbReference type="ChEBI" id="CHEBI:15377"/>
        <dbReference type="ChEBI" id="CHEBI:15378"/>
        <dbReference type="ChEBI" id="CHEBI:30616"/>
        <dbReference type="ChEBI" id="CHEBI:43474"/>
        <dbReference type="ChEBI" id="CHEBI:57932"/>
        <dbReference type="ChEBI" id="CHEBI:456216"/>
        <dbReference type="EC" id="7.4.2.11"/>
    </reaction>
</comment>
<comment type="subunit">
    <text evidence="1">The complex is composed of two ATP-binding proteins (MetN), two transmembrane proteins (MetI) and a solute-binding protein (MetQ).</text>
</comment>
<comment type="subcellular location">
    <subcellularLocation>
        <location evidence="1">Cell inner membrane</location>
        <topology evidence="1">Peripheral membrane protein</topology>
    </subcellularLocation>
</comment>
<comment type="similarity">
    <text evidence="1">Belongs to the ABC transporter superfamily. Methionine importer (TC 3.A.1.24) family.</text>
</comment>
<sequence length="350" mass="38104">MIELKGISQHFRGAGGTDVHALRDVDLSIDKGEIFGIIGRSGAGKSTLVRVINLLNRPTSGTVTVAGQSLTALNADGLRQARRKIGMIFQHFNLLSSRTVYDNVALPLELAGTPRERIREIVLPLLELVGLDAHKDRYPAQISGGQKQRVGIARALASQPDVLLSDEATSALDPETTRSILDLLRKINRELGLTIVLITHQMEVIKQVCDRVAVLDAGRVVELGRVIDVFLKPRHDVTRALIGEVISQELPPSVLARVESRLVAARERGGRDHLFRLAFTGAGVDQPVLAQAIRNYGLDFNILHGHIDEIQGQAFGSLAILASGESADIDNAMHFLREQGVVVEEINHVV</sequence>
<organism>
    <name type="scientific">Ralstonia nicotianae (strain ATCC BAA-1114 / GMI1000)</name>
    <name type="common">Ralstonia solanacearum</name>
    <dbReference type="NCBI Taxonomy" id="267608"/>
    <lineage>
        <taxon>Bacteria</taxon>
        <taxon>Pseudomonadati</taxon>
        <taxon>Pseudomonadota</taxon>
        <taxon>Betaproteobacteria</taxon>
        <taxon>Burkholderiales</taxon>
        <taxon>Burkholderiaceae</taxon>
        <taxon>Ralstonia</taxon>
        <taxon>Ralstonia solanacearum species complex</taxon>
    </lineage>
</organism>
<name>METN_RALN1</name>
<accession>Q8Y0X3</accession>
<reference key="1">
    <citation type="journal article" date="2002" name="Nature">
        <title>Genome sequence of the plant pathogen Ralstonia solanacearum.</title>
        <authorList>
            <person name="Salanoubat M."/>
            <person name="Genin S."/>
            <person name="Artiguenave F."/>
            <person name="Gouzy J."/>
            <person name="Mangenot S."/>
            <person name="Arlat M."/>
            <person name="Billault A."/>
            <person name="Brottier P."/>
            <person name="Camus J.-C."/>
            <person name="Cattolico L."/>
            <person name="Chandler M."/>
            <person name="Choisne N."/>
            <person name="Claudel-Renard C."/>
            <person name="Cunnac S."/>
            <person name="Demange N."/>
            <person name="Gaspin C."/>
            <person name="Lavie M."/>
            <person name="Moisan A."/>
            <person name="Robert C."/>
            <person name="Saurin W."/>
            <person name="Schiex T."/>
            <person name="Siguier P."/>
            <person name="Thebault P."/>
            <person name="Whalen M."/>
            <person name="Wincker P."/>
            <person name="Levy M."/>
            <person name="Weissenbach J."/>
            <person name="Boucher C.A."/>
        </authorList>
    </citation>
    <scope>NUCLEOTIDE SEQUENCE [LARGE SCALE GENOMIC DNA]</scope>
    <source>
        <strain>ATCC BAA-1114 / GMI1000</strain>
    </source>
</reference>